<comment type="function">
    <text evidence="2">Involved in plant growth and disease resistance.</text>
</comment>
<comment type="subcellular location">
    <subcellularLocation>
        <location evidence="2">Nucleus</location>
    </subcellularLocation>
</comment>
<comment type="miscellaneous">
    <text>Plants silencing LOL2 display a dwarf phenotype, decreased content of gibberellin GA1, reduced expression of KS1 involved in gibberellin biosynthesis and reduced resistance to bacterial blight. Plants overexpressing LOL2 show constitutive expression of PR1 and enhanced resistance to bacterial blight.</text>
</comment>
<comment type="sequence caution" evidence="3">
    <conflict type="erroneous gene model prediction">
        <sequence resource="EMBL-CDS" id="BAD61218"/>
    </conflict>
</comment>
<comment type="sequence caution" evidence="3">
    <conflict type="erroneous gene model prediction">
        <sequence resource="EMBL-CDS" id="BAD61508"/>
    </conflict>
</comment>
<comment type="sequence caution" evidence="3">
    <conflict type="erroneous gene model prediction">
        <sequence resource="EMBL-CDS" id="BAF05472"/>
    </conflict>
</comment>
<evidence type="ECO:0000256" key="1">
    <source>
        <dbReference type="SAM" id="MobiDB-lite"/>
    </source>
</evidence>
<evidence type="ECO:0000269" key="2">
    <source>
    </source>
</evidence>
<evidence type="ECO:0000305" key="3"/>
<gene>
    <name type="primary">LOL5</name>
    <name type="synonym">LOL2</name>
    <name type="ordered locus">Os01g0612700</name>
    <name type="ordered locus">LOC_Os01g42710</name>
    <name type="ORF">P0046B10.32</name>
    <name type="ORF">P0410E01.13</name>
</gene>
<sequence>MSQLPLASQATTTDLVSTTAMQPQSEGIVDESLQPQHPPSSTAHDSPCLQDSVPLVPPPPSPYLNKEVGQMVCGSCRILLAYFRGAGYVHCTCCQTMNYVLEAHEVGKVHCGHCATLLMYPFGAPAVKCSLCLFVTEIGERNVRRRLSIEQPTRTNSSGLAEA</sequence>
<feature type="chain" id="PRO_0000408491" description="Protein LOL5">
    <location>
        <begin position="1"/>
        <end position="163"/>
    </location>
</feature>
<feature type="region of interest" description="Disordered" evidence="1">
    <location>
        <begin position="1"/>
        <end position="51"/>
    </location>
</feature>
<feature type="region of interest" description="Putative zinc finger 1">
    <location>
        <begin position="70"/>
        <end position="100"/>
    </location>
</feature>
<feature type="region of interest" description="Putative zinc finger 2">
    <location>
        <begin position="108"/>
        <end position="138"/>
    </location>
</feature>
<feature type="compositionally biased region" description="Polar residues" evidence="1">
    <location>
        <begin position="1"/>
        <end position="25"/>
    </location>
</feature>
<feature type="compositionally biased region" description="Polar residues" evidence="1">
    <location>
        <begin position="33"/>
        <end position="44"/>
    </location>
</feature>
<name>LOL5_ORYSJ</name>
<reference key="1">
    <citation type="submission" date="2004-01" db="EMBL/GenBank/DDBJ databases">
        <title>A LSD1-like zinc finger protein cDNA from rice.</title>
        <authorList>
            <person name="Huang J."/>
            <person name="Huang F."/>
            <person name="Zhang H.S."/>
        </authorList>
    </citation>
    <scope>NUCLEOTIDE SEQUENCE [MRNA]</scope>
    <source>
        <tissue>Leaf</tissue>
    </source>
</reference>
<reference key="2">
    <citation type="journal article" date="2002" name="Nature">
        <title>The genome sequence and structure of rice chromosome 1.</title>
        <authorList>
            <person name="Sasaki T."/>
            <person name="Matsumoto T."/>
            <person name="Yamamoto K."/>
            <person name="Sakata K."/>
            <person name="Baba T."/>
            <person name="Katayose Y."/>
            <person name="Wu J."/>
            <person name="Niimura Y."/>
            <person name="Cheng Z."/>
            <person name="Nagamura Y."/>
            <person name="Antonio B.A."/>
            <person name="Kanamori H."/>
            <person name="Hosokawa S."/>
            <person name="Masukawa M."/>
            <person name="Arikawa K."/>
            <person name="Chiden Y."/>
            <person name="Hayashi M."/>
            <person name="Okamoto M."/>
            <person name="Ando T."/>
            <person name="Aoki H."/>
            <person name="Arita K."/>
            <person name="Hamada M."/>
            <person name="Harada C."/>
            <person name="Hijishita S."/>
            <person name="Honda M."/>
            <person name="Ichikawa Y."/>
            <person name="Idonuma A."/>
            <person name="Iijima M."/>
            <person name="Ikeda M."/>
            <person name="Ikeno M."/>
            <person name="Ito S."/>
            <person name="Ito T."/>
            <person name="Ito Y."/>
            <person name="Ito Y."/>
            <person name="Iwabuchi A."/>
            <person name="Kamiya K."/>
            <person name="Karasawa W."/>
            <person name="Katagiri S."/>
            <person name="Kikuta A."/>
            <person name="Kobayashi N."/>
            <person name="Kono I."/>
            <person name="Machita K."/>
            <person name="Maehara T."/>
            <person name="Mizuno H."/>
            <person name="Mizubayashi T."/>
            <person name="Mukai Y."/>
            <person name="Nagasaki H."/>
            <person name="Nakashima M."/>
            <person name="Nakama Y."/>
            <person name="Nakamichi Y."/>
            <person name="Nakamura M."/>
            <person name="Namiki N."/>
            <person name="Negishi M."/>
            <person name="Ohta I."/>
            <person name="Ono N."/>
            <person name="Saji S."/>
            <person name="Sakai K."/>
            <person name="Shibata M."/>
            <person name="Shimokawa T."/>
            <person name="Shomura A."/>
            <person name="Song J."/>
            <person name="Takazaki Y."/>
            <person name="Terasawa K."/>
            <person name="Tsuji K."/>
            <person name="Waki K."/>
            <person name="Yamagata H."/>
            <person name="Yamane H."/>
            <person name="Yoshiki S."/>
            <person name="Yoshihara R."/>
            <person name="Yukawa K."/>
            <person name="Zhong H."/>
            <person name="Iwama H."/>
            <person name="Endo T."/>
            <person name="Ito H."/>
            <person name="Hahn J.H."/>
            <person name="Kim H.-I."/>
            <person name="Eun M.-Y."/>
            <person name="Yano M."/>
            <person name="Jiang J."/>
            <person name="Gojobori T."/>
        </authorList>
    </citation>
    <scope>NUCLEOTIDE SEQUENCE [LARGE SCALE GENOMIC DNA]</scope>
    <source>
        <strain>cv. Nipponbare</strain>
    </source>
</reference>
<reference key="3">
    <citation type="journal article" date="2005" name="Nature">
        <title>The map-based sequence of the rice genome.</title>
        <authorList>
            <consortium name="International rice genome sequencing project (IRGSP)"/>
        </authorList>
    </citation>
    <scope>NUCLEOTIDE SEQUENCE [LARGE SCALE GENOMIC DNA]</scope>
    <source>
        <strain>cv. Nipponbare</strain>
    </source>
</reference>
<reference key="4">
    <citation type="journal article" date="2008" name="Nucleic Acids Res.">
        <title>The rice annotation project database (RAP-DB): 2008 update.</title>
        <authorList>
            <consortium name="The rice annotation project (RAP)"/>
        </authorList>
    </citation>
    <scope>GENOME REANNOTATION</scope>
    <source>
        <strain>cv. Nipponbare</strain>
    </source>
</reference>
<reference key="5">
    <citation type="journal article" date="2013" name="Rice">
        <title>Improvement of the Oryza sativa Nipponbare reference genome using next generation sequence and optical map data.</title>
        <authorList>
            <person name="Kawahara Y."/>
            <person name="de la Bastide M."/>
            <person name="Hamilton J.P."/>
            <person name="Kanamori H."/>
            <person name="McCombie W.R."/>
            <person name="Ouyang S."/>
            <person name="Schwartz D.C."/>
            <person name="Tanaka T."/>
            <person name="Wu J."/>
            <person name="Zhou S."/>
            <person name="Childs K.L."/>
            <person name="Davidson R.M."/>
            <person name="Lin H."/>
            <person name="Quesada-Ocampo L."/>
            <person name="Vaillancourt B."/>
            <person name="Sakai H."/>
            <person name="Lee S.S."/>
            <person name="Kim J."/>
            <person name="Numa H."/>
            <person name="Itoh T."/>
            <person name="Buell C.R."/>
            <person name="Matsumoto T."/>
        </authorList>
    </citation>
    <scope>GENOME REANNOTATION</scope>
    <source>
        <strain>cv. Nipponbare</strain>
    </source>
</reference>
<reference key="6">
    <citation type="journal article" date="2007" name="Mol. Genet. Genomics">
        <title>The rice OsLOL2 gene encodes a zinc finger protein involved in rice growth and disease resistance.</title>
        <authorList>
            <person name="Xu C."/>
            <person name="He C."/>
        </authorList>
    </citation>
    <scope>FUNCTION</scope>
    <scope>SUBCELLULAR LOCATION</scope>
</reference>
<protein>
    <recommendedName>
        <fullName>Protein LOL5</fullName>
    </recommendedName>
    <alternativeName>
        <fullName>OsLOL2</fullName>
    </alternativeName>
    <alternativeName>
        <fullName>Protein LSD ONE LIKE 5</fullName>
        <shortName>OsLOL5</shortName>
    </alternativeName>
    <alternativeName>
        <fullName>Putative zinc finger LOL5</fullName>
    </alternativeName>
</protein>
<accession>Q704V3</accession>
<accession>Q0JLA6</accession>
<accession>Q5ZBI2</accession>
<proteinExistence type="evidence at transcript level"/>
<keyword id="KW-0539">Nucleus</keyword>
<keyword id="KW-0611">Plant defense</keyword>
<keyword id="KW-1185">Reference proteome</keyword>
<dbReference type="EMBL" id="AJ620677">
    <property type="protein sequence ID" value="CAF05903.1"/>
    <property type="molecule type" value="mRNA"/>
</dbReference>
<dbReference type="EMBL" id="AP002866">
    <property type="protein sequence ID" value="BAD61218.1"/>
    <property type="status" value="ALT_SEQ"/>
    <property type="molecule type" value="Genomic_DNA"/>
</dbReference>
<dbReference type="EMBL" id="AP003314">
    <property type="protein sequence ID" value="BAD61508.1"/>
    <property type="status" value="ALT_SEQ"/>
    <property type="molecule type" value="Genomic_DNA"/>
</dbReference>
<dbReference type="EMBL" id="AP008207">
    <property type="protein sequence ID" value="BAF05472.1"/>
    <property type="status" value="ALT_SEQ"/>
    <property type="molecule type" value="Genomic_DNA"/>
</dbReference>
<dbReference type="EMBL" id="AP014957">
    <property type="status" value="NOT_ANNOTATED_CDS"/>
    <property type="molecule type" value="Genomic_DNA"/>
</dbReference>
<dbReference type="STRING" id="39947.Q704V3"/>
<dbReference type="PaxDb" id="39947-Q704V3"/>
<dbReference type="EnsemblPlants" id="Os01t0612700-02">
    <property type="protein sequence ID" value="Os01t0612700-02"/>
    <property type="gene ID" value="Os01g0612700"/>
</dbReference>
<dbReference type="Gramene" id="Os01t0612700-02">
    <property type="protein sequence ID" value="Os01t0612700-02"/>
    <property type="gene ID" value="Os01g0612700"/>
</dbReference>
<dbReference type="KEGG" id="dosa:Os01g0612700"/>
<dbReference type="eggNOG" id="ENOG502S2GF">
    <property type="taxonomic scope" value="Eukaryota"/>
</dbReference>
<dbReference type="HOGENOM" id="CLU_004625_0_0_1"/>
<dbReference type="InParanoid" id="Q704V3"/>
<dbReference type="Proteomes" id="UP000000763">
    <property type="component" value="Chromosome 1"/>
</dbReference>
<dbReference type="Proteomes" id="UP000059680">
    <property type="component" value="Chromosome 1"/>
</dbReference>
<dbReference type="ExpressionAtlas" id="Q704V3">
    <property type="expression patterns" value="baseline and differential"/>
</dbReference>
<dbReference type="GO" id="GO:0005634">
    <property type="term" value="C:nucleus"/>
    <property type="evidence" value="ECO:0000314"/>
    <property type="project" value="UniProtKB"/>
</dbReference>
<dbReference type="GO" id="GO:0006952">
    <property type="term" value="P:defense response"/>
    <property type="evidence" value="ECO:0007669"/>
    <property type="project" value="UniProtKB-KW"/>
</dbReference>
<dbReference type="GO" id="GO:0031349">
    <property type="term" value="P:positive regulation of defense response"/>
    <property type="evidence" value="ECO:0000315"/>
    <property type="project" value="UniProtKB"/>
</dbReference>
<dbReference type="GO" id="GO:0045927">
    <property type="term" value="P:positive regulation of growth"/>
    <property type="evidence" value="ECO:0000315"/>
    <property type="project" value="UniProtKB"/>
</dbReference>
<dbReference type="InterPro" id="IPR040319">
    <property type="entry name" value="LSD1-like"/>
</dbReference>
<dbReference type="InterPro" id="IPR005735">
    <property type="entry name" value="Znf_LSD1"/>
</dbReference>
<dbReference type="NCBIfam" id="TIGR01053">
    <property type="entry name" value="LSD1"/>
    <property type="match status" value="2"/>
</dbReference>
<dbReference type="PANTHER" id="PTHR31747:SF17">
    <property type="entry name" value="PROTEIN LOL2"/>
    <property type="match status" value="1"/>
</dbReference>
<dbReference type="PANTHER" id="PTHR31747">
    <property type="entry name" value="PROTEIN LSD1"/>
    <property type="match status" value="1"/>
</dbReference>
<dbReference type="Pfam" id="PF06943">
    <property type="entry name" value="zf-LSD1"/>
    <property type="match status" value="2"/>
</dbReference>
<organism>
    <name type="scientific">Oryza sativa subsp. japonica</name>
    <name type="common">Rice</name>
    <dbReference type="NCBI Taxonomy" id="39947"/>
    <lineage>
        <taxon>Eukaryota</taxon>
        <taxon>Viridiplantae</taxon>
        <taxon>Streptophyta</taxon>
        <taxon>Embryophyta</taxon>
        <taxon>Tracheophyta</taxon>
        <taxon>Spermatophyta</taxon>
        <taxon>Magnoliopsida</taxon>
        <taxon>Liliopsida</taxon>
        <taxon>Poales</taxon>
        <taxon>Poaceae</taxon>
        <taxon>BOP clade</taxon>
        <taxon>Oryzoideae</taxon>
        <taxon>Oryzeae</taxon>
        <taxon>Oryzinae</taxon>
        <taxon>Oryza</taxon>
        <taxon>Oryza sativa</taxon>
    </lineage>
</organism>